<organism>
    <name type="scientific">Streptococcus agalactiae serotype Ia (strain ATCC 27591 / A909 / CDC SS700)</name>
    <dbReference type="NCBI Taxonomy" id="205921"/>
    <lineage>
        <taxon>Bacteria</taxon>
        <taxon>Bacillati</taxon>
        <taxon>Bacillota</taxon>
        <taxon>Bacilli</taxon>
        <taxon>Lactobacillales</taxon>
        <taxon>Streptococcaceae</taxon>
        <taxon>Streptococcus</taxon>
    </lineage>
</organism>
<name>CAPP_STRA1</name>
<feature type="chain" id="PRO_1000025592" description="Phosphoenolpyruvate carboxylase">
    <location>
        <begin position="1"/>
        <end position="931"/>
    </location>
</feature>
<feature type="active site" evidence="1">
    <location>
        <position position="138"/>
    </location>
</feature>
<feature type="active site" evidence="1">
    <location>
        <position position="594"/>
    </location>
</feature>
<keyword id="KW-0120">Carbon dioxide fixation</keyword>
<keyword id="KW-0456">Lyase</keyword>
<keyword id="KW-0460">Magnesium</keyword>
<dbReference type="EC" id="4.1.1.31" evidence="1"/>
<dbReference type="EMBL" id="CP000114">
    <property type="protein sequence ID" value="ABA45567.1"/>
    <property type="molecule type" value="Genomic_DNA"/>
</dbReference>
<dbReference type="RefSeq" id="WP_000019270.1">
    <property type="nucleotide sequence ID" value="NC_007432.1"/>
</dbReference>
<dbReference type="SMR" id="Q3K1U6"/>
<dbReference type="KEGG" id="sak:SAK_0885"/>
<dbReference type="HOGENOM" id="CLU_006557_2_0_9"/>
<dbReference type="GO" id="GO:0005829">
    <property type="term" value="C:cytosol"/>
    <property type="evidence" value="ECO:0007669"/>
    <property type="project" value="TreeGrafter"/>
</dbReference>
<dbReference type="GO" id="GO:0000287">
    <property type="term" value="F:magnesium ion binding"/>
    <property type="evidence" value="ECO:0007669"/>
    <property type="project" value="UniProtKB-UniRule"/>
</dbReference>
<dbReference type="GO" id="GO:0008964">
    <property type="term" value="F:phosphoenolpyruvate carboxylase activity"/>
    <property type="evidence" value="ECO:0007669"/>
    <property type="project" value="UniProtKB-UniRule"/>
</dbReference>
<dbReference type="GO" id="GO:0015977">
    <property type="term" value="P:carbon fixation"/>
    <property type="evidence" value="ECO:0007669"/>
    <property type="project" value="UniProtKB-UniRule"/>
</dbReference>
<dbReference type="GO" id="GO:0006107">
    <property type="term" value="P:oxaloacetate metabolic process"/>
    <property type="evidence" value="ECO:0007669"/>
    <property type="project" value="UniProtKB-UniRule"/>
</dbReference>
<dbReference type="GO" id="GO:0006099">
    <property type="term" value="P:tricarboxylic acid cycle"/>
    <property type="evidence" value="ECO:0007669"/>
    <property type="project" value="InterPro"/>
</dbReference>
<dbReference type="Gene3D" id="1.20.1440.90">
    <property type="entry name" value="Phosphoenolpyruvate/pyruvate domain"/>
    <property type="match status" value="1"/>
</dbReference>
<dbReference type="HAMAP" id="MF_00595">
    <property type="entry name" value="PEPcase_type1"/>
    <property type="match status" value="1"/>
</dbReference>
<dbReference type="InterPro" id="IPR021135">
    <property type="entry name" value="PEP_COase"/>
</dbReference>
<dbReference type="InterPro" id="IPR022805">
    <property type="entry name" value="PEP_COase_bac/pln-type"/>
</dbReference>
<dbReference type="InterPro" id="IPR018129">
    <property type="entry name" value="PEP_COase_Lys_AS"/>
</dbReference>
<dbReference type="InterPro" id="IPR033129">
    <property type="entry name" value="PEPCASE_His_AS"/>
</dbReference>
<dbReference type="InterPro" id="IPR015813">
    <property type="entry name" value="Pyrv/PenolPyrv_kinase-like_dom"/>
</dbReference>
<dbReference type="NCBIfam" id="NF000584">
    <property type="entry name" value="PRK00009.1"/>
    <property type="match status" value="1"/>
</dbReference>
<dbReference type="PANTHER" id="PTHR30523">
    <property type="entry name" value="PHOSPHOENOLPYRUVATE CARBOXYLASE"/>
    <property type="match status" value="1"/>
</dbReference>
<dbReference type="PANTHER" id="PTHR30523:SF6">
    <property type="entry name" value="PHOSPHOENOLPYRUVATE CARBOXYLASE"/>
    <property type="match status" value="1"/>
</dbReference>
<dbReference type="Pfam" id="PF00311">
    <property type="entry name" value="PEPcase"/>
    <property type="match status" value="1"/>
</dbReference>
<dbReference type="PRINTS" id="PR00150">
    <property type="entry name" value="PEPCARBXLASE"/>
</dbReference>
<dbReference type="SUPFAM" id="SSF51621">
    <property type="entry name" value="Phosphoenolpyruvate/pyruvate domain"/>
    <property type="match status" value="1"/>
</dbReference>
<dbReference type="PROSITE" id="PS00781">
    <property type="entry name" value="PEPCASE_1"/>
    <property type="match status" value="1"/>
</dbReference>
<dbReference type="PROSITE" id="PS00393">
    <property type="entry name" value="PEPCASE_2"/>
    <property type="match status" value="1"/>
</dbReference>
<proteinExistence type="inferred from homology"/>
<comment type="function">
    <text evidence="1">Forms oxaloacetate, a four-carbon dicarboxylic acid source for the tricarboxylic acid cycle.</text>
</comment>
<comment type="catalytic activity">
    <reaction evidence="1">
        <text>oxaloacetate + phosphate = phosphoenolpyruvate + hydrogencarbonate</text>
        <dbReference type="Rhea" id="RHEA:28370"/>
        <dbReference type="ChEBI" id="CHEBI:16452"/>
        <dbReference type="ChEBI" id="CHEBI:17544"/>
        <dbReference type="ChEBI" id="CHEBI:43474"/>
        <dbReference type="ChEBI" id="CHEBI:58702"/>
        <dbReference type="EC" id="4.1.1.31"/>
    </reaction>
</comment>
<comment type="cofactor">
    <cofactor evidence="1">
        <name>Mg(2+)</name>
        <dbReference type="ChEBI" id="CHEBI:18420"/>
    </cofactor>
</comment>
<comment type="similarity">
    <text evidence="1">Belongs to the PEPCase type 1 family.</text>
</comment>
<evidence type="ECO:0000255" key="1">
    <source>
        <dbReference type="HAMAP-Rule" id="MF_00595"/>
    </source>
</evidence>
<reference key="1">
    <citation type="journal article" date="2005" name="Proc. Natl. Acad. Sci. U.S.A.">
        <title>Genome analysis of multiple pathogenic isolates of Streptococcus agalactiae: implications for the microbial 'pan-genome'.</title>
        <authorList>
            <person name="Tettelin H."/>
            <person name="Masignani V."/>
            <person name="Cieslewicz M.J."/>
            <person name="Donati C."/>
            <person name="Medini D."/>
            <person name="Ward N.L."/>
            <person name="Angiuoli S.V."/>
            <person name="Crabtree J."/>
            <person name="Jones A.L."/>
            <person name="Durkin A.S."/>
            <person name="DeBoy R.T."/>
            <person name="Davidsen T.M."/>
            <person name="Mora M."/>
            <person name="Scarselli M."/>
            <person name="Margarit y Ros I."/>
            <person name="Peterson J.D."/>
            <person name="Hauser C.R."/>
            <person name="Sundaram J.P."/>
            <person name="Nelson W.C."/>
            <person name="Madupu R."/>
            <person name="Brinkac L.M."/>
            <person name="Dodson R.J."/>
            <person name="Rosovitz M.J."/>
            <person name="Sullivan S.A."/>
            <person name="Daugherty S.C."/>
            <person name="Haft D.H."/>
            <person name="Selengut J."/>
            <person name="Gwinn M.L."/>
            <person name="Zhou L."/>
            <person name="Zafar N."/>
            <person name="Khouri H."/>
            <person name="Radune D."/>
            <person name="Dimitrov G."/>
            <person name="Watkins K."/>
            <person name="O'Connor K.J."/>
            <person name="Smith S."/>
            <person name="Utterback T.R."/>
            <person name="White O."/>
            <person name="Rubens C.E."/>
            <person name="Grandi G."/>
            <person name="Madoff L.C."/>
            <person name="Kasper D.L."/>
            <person name="Telford J.L."/>
            <person name="Wessels M.R."/>
            <person name="Rappuoli R."/>
            <person name="Fraser C.M."/>
        </authorList>
    </citation>
    <scope>NUCLEOTIDE SEQUENCE [LARGE SCALE GENOMIC DNA]</scope>
    <source>
        <strain>ATCC 27591 / A909 / CDC SS700</strain>
    </source>
</reference>
<protein>
    <recommendedName>
        <fullName evidence="1">Phosphoenolpyruvate carboxylase</fullName>
        <shortName evidence="1">PEPC</shortName>
        <shortName evidence="1">PEPCase</shortName>
        <ecNumber evidence="1">4.1.1.31</ecNumber>
    </recommendedName>
</protein>
<sequence>MSHPKLESSSNKEIITEEVGLLKQLLDEATQKLIGSESFDKIEKIVSLSSTDDYTGLKETISALSNEEMVIVSRYFSILPLLINISEDVDLAYEINYKNNLNQDYLGKLSTTIDVVAGHENAKDILEHVNVVPVLTAHPTQVQRKTVLELTSKIHDLLRKYRDVKAGIVNQEKWYADLRRYIGIIMQTDTIREKKLKVKNEITNVMEYYNRSLIKAVTKLTAEYKALAAKKGIHLENPKPLTMGMWIGGDRDGNPFVTAETLRLSAMVQSEVIINHYIEQLNELYRNMSLSINLTEVSPELVTLANQSQDNSVYRENEPYRKAFNFIQDKLVQTLLNLKVGSSPKEKFVSRQESSDIVGRYIKSHIAQVASDIQTEELPAYATAEEFKQDLLLVKQSLVQYGQDSLVDGELACLIQAVDIFGFYLATIDMRQDSSINEACVAELLKSANIVDDYSSLSEEEKCQLLLKELTEDPRTLSSTHAPKSELLQKELAIFQTARELKDQLGEDIINQHIISHTESVSDMFELAIMLKEVGLIDANQARIQIVPLFETIEDLDNSRDIMTQYLHYELVKKWIATNNNYQEIMLGYSDSNKDGGYLSSGWTLYKAQNELTKIGEENGIKITFFHGRGGTVGRGGGPSYEAITSQPFGSIKDRIRLTEQGEIIENKYGNQDAAYYNLEMLISASIDRMVTRMITNPNEIDNFRETMDGIVSESNAVYRNLVFDNPYFYDYFFEASPIKEVSSLNIGSRPAARKTITEISGLRAIPWVFSWSQNRIMFPGWYGVGSAFKHFIEQDEANLAKLQTMYQKWPFFNSLLSNVDMVLSKSNMNIALQYAQLAGSKEVRDVFNIILNEWQLTKDMILAIEQHDNLLEENPMLHASLDYRLPYFNVLNYVQIELIKRLRSNQLDEDYEKLIHITINGIATGLRNSG</sequence>
<accession>Q3K1U6</accession>
<gene>
    <name evidence="1" type="primary">ppc</name>
    <name type="ordered locus">SAK_0885</name>
</gene>